<organism>
    <name type="scientific">Chlorella vulgaris</name>
    <name type="common">Green alga</name>
    <dbReference type="NCBI Taxonomy" id="3077"/>
    <lineage>
        <taxon>Eukaryota</taxon>
        <taxon>Viridiplantae</taxon>
        <taxon>Chlorophyta</taxon>
        <taxon>core chlorophytes</taxon>
        <taxon>Trebouxiophyceae</taxon>
        <taxon>Chlorellales</taxon>
        <taxon>Chlorellaceae</taxon>
        <taxon>Chlorella clade</taxon>
        <taxon>Chlorella</taxon>
    </lineage>
</organism>
<accession>O20120</accession>
<geneLocation type="chloroplast"/>
<reference key="1">
    <citation type="journal article" date="1997" name="Proc. Natl. Acad. Sci. U.S.A.">
        <title>Complete nucleotide sequence of the chloroplast genome from the green alga Chlorella vulgaris: the existence of genes possibly involved in chloroplast division.</title>
        <authorList>
            <person name="Wakasugi T."/>
            <person name="Nagai T."/>
            <person name="Kapoor M."/>
            <person name="Sugita M."/>
            <person name="Ito M."/>
            <person name="Ito S."/>
            <person name="Tsudzuki J."/>
            <person name="Nakashima K."/>
            <person name="Tsudzuki T."/>
            <person name="Suzuki Y."/>
            <person name="Hamada A."/>
            <person name="Ohta T."/>
            <person name="Inamura A."/>
            <person name="Yoshinaga K."/>
            <person name="Sugiura M."/>
        </authorList>
    </citation>
    <scope>NUCLEOTIDE SEQUENCE [LARGE SCALE GENOMIC DNA]</scope>
    <source>
        <strain>IAM C-27 / Tamiya</strain>
    </source>
</reference>
<evidence type="ECO:0000256" key="1">
    <source>
        <dbReference type="SAM" id="MobiDB-lite"/>
    </source>
</evidence>
<proteinExistence type="predicted"/>
<feature type="chain" id="PRO_0000217510" description="Uncharacterized 14.6 kDa protein in psaC-atpA intergenic region">
    <location>
        <begin position="1"/>
        <end position="133"/>
    </location>
</feature>
<feature type="region of interest" description="Disordered" evidence="1">
    <location>
        <begin position="44"/>
        <end position="79"/>
    </location>
</feature>
<feature type="compositionally biased region" description="Polar residues" evidence="1">
    <location>
        <begin position="63"/>
        <end position="79"/>
    </location>
</feature>
<protein>
    <recommendedName>
        <fullName>Uncharacterized 14.6 kDa protein in psaC-atpA intergenic region</fullName>
    </recommendedName>
    <alternativeName>
        <fullName>ORF133</fullName>
    </alternativeName>
</protein>
<comment type="subcellular location">
    <subcellularLocation>
        <location>Plastid</location>
        <location>Chloroplast</location>
    </subcellularLocation>
</comment>
<dbReference type="EMBL" id="AB001684">
    <property type="protein sequence ID" value="BAA57852.1"/>
    <property type="molecule type" value="Genomic_DNA"/>
</dbReference>
<dbReference type="PIR" id="T07205">
    <property type="entry name" value="T07205"/>
</dbReference>
<dbReference type="RefSeq" id="NP_045777.1">
    <property type="nucleotide sequence ID" value="NC_001865.1"/>
</dbReference>
<dbReference type="GeneID" id="1457399"/>
<dbReference type="GO" id="GO:0009507">
    <property type="term" value="C:chloroplast"/>
    <property type="evidence" value="ECO:0007669"/>
    <property type="project" value="UniProtKB-SubCell"/>
</dbReference>
<sequence length="133" mass="14583">MVTLSDLESNASSSVTKNEVNTSSLVNGNGVLIITENVNKEHSVENQLASSKTEEQTLKISKKSNLNPAQKSSTFGLENTSPVIRPTSVFTKSTVLSTENNLVSFEVDFMNFFSALNFFLESLVYFVVNDFSS</sequence>
<keyword id="KW-0150">Chloroplast</keyword>
<keyword id="KW-0934">Plastid</keyword>
<name>YCX2_CHLVU</name>